<dbReference type="EC" id="1.10.3.-"/>
<dbReference type="EMBL" id="CP000046">
    <property type="protein sequence ID" value="AAW36534.1"/>
    <property type="molecule type" value="Genomic_DNA"/>
</dbReference>
<dbReference type="RefSeq" id="WP_000032836.1">
    <property type="nucleotide sequence ID" value="NZ_JBGOFO010000002.1"/>
</dbReference>
<dbReference type="SMR" id="Q5HH23"/>
<dbReference type="KEGG" id="sac:SACOL1070"/>
<dbReference type="HOGENOM" id="CLU_036876_6_0_9"/>
<dbReference type="Proteomes" id="UP000000530">
    <property type="component" value="Chromosome"/>
</dbReference>
<dbReference type="GO" id="GO:0005886">
    <property type="term" value="C:plasma membrane"/>
    <property type="evidence" value="ECO:0007669"/>
    <property type="project" value="UniProtKB-SubCell"/>
</dbReference>
<dbReference type="GO" id="GO:0005507">
    <property type="term" value="F:copper ion binding"/>
    <property type="evidence" value="ECO:0007669"/>
    <property type="project" value="InterPro"/>
</dbReference>
<dbReference type="GO" id="GO:0009486">
    <property type="term" value="F:cytochrome bo3 ubiquinol oxidase activity"/>
    <property type="evidence" value="ECO:0007669"/>
    <property type="project" value="InterPro"/>
</dbReference>
<dbReference type="GO" id="GO:0004129">
    <property type="term" value="F:cytochrome-c oxidase activity"/>
    <property type="evidence" value="ECO:0007669"/>
    <property type="project" value="InterPro"/>
</dbReference>
<dbReference type="GO" id="GO:0016682">
    <property type="term" value="F:oxidoreductase activity, acting on diphenols and related substances as donors, oxygen as acceptor"/>
    <property type="evidence" value="ECO:0007669"/>
    <property type="project" value="InterPro"/>
</dbReference>
<dbReference type="GO" id="GO:0042773">
    <property type="term" value="P:ATP synthesis coupled electron transport"/>
    <property type="evidence" value="ECO:0007669"/>
    <property type="project" value="TreeGrafter"/>
</dbReference>
<dbReference type="CDD" id="cd04212">
    <property type="entry name" value="CuRO_UO_II"/>
    <property type="match status" value="1"/>
</dbReference>
<dbReference type="FunFam" id="2.60.40.420:FF:000014">
    <property type="entry name" value="Quinol oxidase subunit 2"/>
    <property type="match status" value="1"/>
</dbReference>
<dbReference type="Gene3D" id="1.10.287.90">
    <property type="match status" value="1"/>
</dbReference>
<dbReference type="Gene3D" id="2.60.40.420">
    <property type="entry name" value="Cupredoxins - blue copper proteins"/>
    <property type="match status" value="1"/>
</dbReference>
<dbReference type="InterPro" id="IPR045187">
    <property type="entry name" value="CcO_II"/>
</dbReference>
<dbReference type="InterPro" id="IPR002429">
    <property type="entry name" value="CcO_II-like_C"/>
</dbReference>
<dbReference type="InterPro" id="IPR008972">
    <property type="entry name" value="Cupredoxin"/>
</dbReference>
<dbReference type="InterPro" id="IPR034227">
    <property type="entry name" value="CuRO_UO_II"/>
</dbReference>
<dbReference type="InterPro" id="IPR011759">
    <property type="entry name" value="Cyt_c_oxidase_su2_TM_dom"/>
</dbReference>
<dbReference type="InterPro" id="IPR036257">
    <property type="entry name" value="Cyt_c_oxidase_su2_TM_sf"/>
</dbReference>
<dbReference type="InterPro" id="IPR006332">
    <property type="entry name" value="QoxA"/>
</dbReference>
<dbReference type="NCBIfam" id="TIGR01432">
    <property type="entry name" value="QOXA"/>
    <property type="match status" value="1"/>
</dbReference>
<dbReference type="PANTHER" id="PTHR22888:SF18">
    <property type="entry name" value="CYTOCHROME BO(3) UBIQUINOL OXIDASE SUBUNIT 2"/>
    <property type="match status" value="1"/>
</dbReference>
<dbReference type="PANTHER" id="PTHR22888">
    <property type="entry name" value="CYTOCHROME C OXIDASE, SUBUNIT II"/>
    <property type="match status" value="1"/>
</dbReference>
<dbReference type="Pfam" id="PF02790">
    <property type="entry name" value="COX2_TM"/>
    <property type="match status" value="1"/>
</dbReference>
<dbReference type="SUPFAM" id="SSF49503">
    <property type="entry name" value="Cupredoxins"/>
    <property type="match status" value="1"/>
</dbReference>
<dbReference type="SUPFAM" id="SSF81464">
    <property type="entry name" value="Cytochrome c oxidase subunit II-like, transmembrane region"/>
    <property type="match status" value="1"/>
</dbReference>
<dbReference type="PROSITE" id="PS50857">
    <property type="entry name" value="COX2_CUA"/>
    <property type="match status" value="1"/>
</dbReference>
<dbReference type="PROSITE" id="PS50999">
    <property type="entry name" value="COX2_TM"/>
    <property type="match status" value="1"/>
</dbReference>
<dbReference type="PROSITE" id="PS51257">
    <property type="entry name" value="PROKAR_LIPOPROTEIN"/>
    <property type="match status" value="1"/>
</dbReference>
<sequence>MSKFKSLLLLFGTLILLSGCSNIEIFNAKGPVASSQKFLILYSIVFMLVICFVVLGMFAIFIYKYSYNKNAESGKMHHNAIIETIWFVIPIIIVAALAIPTVKTLYDYEKPPKSEKDPMVVYAVSAGYKWFFAYPDEHIETVNTLTIPKDRPVVFKLQAMDTMTSFWIPQLGGQKYAMTGMTMNWTLEASQTGTFRGRNSNFNGEGFSRQTFKVNAVSQKDYDKWVKEVKGKKTLDQDTFDKQLLPSTPNKALEFNGTHMAFVDPAADPEYIFYAYKRFNFELKDPNFTSEENMFKDVSDKPLIPARKAQITNANYKRHGMKLMILGNDEPYNNEFKKDESKNAKEMKKISKDAQDQDNDDHGGGH</sequence>
<protein>
    <recommendedName>
        <fullName>Probable quinol oxidase subunit 2</fullName>
        <ecNumber>1.10.3.-</ecNumber>
    </recommendedName>
    <alternativeName>
        <fullName>Quinol oxidase polypeptide II</fullName>
    </alternativeName>
</protein>
<accession>Q5HH23</accession>
<keyword id="KW-1003">Cell membrane</keyword>
<keyword id="KW-0249">Electron transport</keyword>
<keyword id="KW-0449">Lipoprotein</keyword>
<keyword id="KW-0472">Membrane</keyword>
<keyword id="KW-0560">Oxidoreductase</keyword>
<keyword id="KW-0564">Palmitate</keyword>
<keyword id="KW-0679">Respiratory chain</keyword>
<keyword id="KW-0732">Signal</keyword>
<keyword id="KW-0812">Transmembrane</keyword>
<keyword id="KW-1133">Transmembrane helix</keyword>
<keyword id="KW-0813">Transport</keyword>
<organism>
    <name type="scientific">Staphylococcus aureus (strain COL)</name>
    <dbReference type="NCBI Taxonomy" id="93062"/>
    <lineage>
        <taxon>Bacteria</taxon>
        <taxon>Bacillati</taxon>
        <taxon>Bacillota</taxon>
        <taxon>Bacilli</taxon>
        <taxon>Bacillales</taxon>
        <taxon>Staphylococcaceae</taxon>
        <taxon>Staphylococcus</taxon>
    </lineage>
</organism>
<reference key="1">
    <citation type="journal article" date="2005" name="J. Bacteriol.">
        <title>Insights on evolution of virulence and resistance from the complete genome analysis of an early methicillin-resistant Staphylococcus aureus strain and a biofilm-producing methicillin-resistant Staphylococcus epidermidis strain.</title>
        <authorList>
            <person name="Gill S.R."/>
            <person name="Fouts D.E."/>
            <person name="Archer G.L."/>
            <person name="Mongodin E.F."/>
            <person name="DeBoy R.T."/>
            <person name="Ravel J."/>
            <person name="Paulsen I.T."/>
            <person name="Kolonay J.F."/>
            <person name="Brinkac L.M."/>
            <person name="Beanan M.J."/>
            <person name="Dodson R.J."/>
            <person name="Daugherty S.C."/>
            <person name="Madupu R."/>
            <person name="Angiuoli S.V."/>
            <person name="Durkin A.S."/>
            <person name="Haft D.H."/>
            <person name="Vamathevan J.J."/>
            <person name="Khouri H."/>
            <person name="Utterback T.R."/>
            <person name="Lee C."/>
            <person name="Dimitrov G."/>
            <person name="Jiang L."/>
            <person name="Qin H."/>
            <person name="Weidman J."/>
            <person name="Tran K."/>
            <person name="Kang K.H."/>
            <person name="Hance I.R."/>
            <person name="Nelson K.E."/>
            <person name="Fraser C.M."/>
        </authorList>
    </citation>
    <scope>NUCLEOTIDE SEQUENCE [LARGE SCALE GENOMIC DNA]</scope>
    <source>
        <strain>COL</strain>
    </source>
</reference>
<proteinExistence type="inferred from homology"/>
<comment type="function">
    <text evidence="1">Catalyzes quinol oxidation with the concomitant reduction of oxygen to water. Subunit II transfers the electrons from a quinol to the binuclear center of the catalytic subunit I (By similarity).</text>
</comment>
<comment type="catalytic activity">
    <reaction>
        <text>2 a quinol + O2 = 2 a quinone + 2 H2O</text>
        <dbReference type="Rhea" id="RHEA:55376"/>
        <dbReference type="ChEBI" id="CHEBI:15377"/>
        <dbReference type="ChEBI" id="CHEBI:15379"/>
        <dbReference type="ChEBI" id="CHEBI:24646"/>
        <dbReference type="ChEBI" id="CHEBI:132124"/>
    </reaction>
</comment>
<comment type="subcellular location">
    <subcellularLocation>
        <location evidence="3">Cell membrane</location>
        <topology evidence="1">Multi-pass membrane protein</topology>
    </subcellularLocation>
</comment>
<comment type="similarity">
    <text evidence="5">Belongs to the cytochrome c oxidase subunit 2 family.</text>
</comment>
<feature type="signal peptide" evidence="3">
    <location>
        <begin position="1"/>
        <end position="19"/>
    </location>
</feature>
<feature type="chain" id="PRO_0000275872" description="Probable quinol oxidase subunit 2">
    <location>
        <begin position="20"/>
        <end position="366"/>
    </location>
</feature>
<feature type="transmembrane region" description="Helical" evidence="2">
    <location>
        <begin position="38"/>
        <end position="58"/>
    </location>
</feature>
<feature type="transmembrane region" description="Helical" evidence="2">
    <location>
        <begin position="80"/>
        <end position="100"/>
    </location>
</feature>
<feature type="region of interest" description="Disordered" evidence="4">
    <location>
        <begin position="330"/>
        <end position="366"/>
    </location>
</feature>
<feature type="compositionally biased region" description="Basic and acidic residues" evidence="4">
    <location>
        <begin position="335"/>
        <end position="366"/>
    </location>
</feature>
<feature type="lipid moiety-binding region" description="N-palmitoyl cysteine" evidence="3">
    <location>
        <position position="20"/>
    </location>
</feature>
<feature type="lipid moiety-binding region" description="S-diacylglycerol cysteine" evidence="3">
    <location>
        <position position="20"/>
    </location>
</feature>
<name>QOX2_STAAC</name>
<evidence type="ECO:0000250" key="1"/>
<evidence type="ECO:0000255" key="2"/>
<evidence type="ECO:0000255" key="3">
    <source>
        <dbReference type="PROSITE-ProRule" id="PRU00303"/>
    </source>
</evidence>
<evidence type="ECO:0000256" key="4">
    <source>
        <dbReference type="SAM" id="MobiDB-lite"/>
    </source>
</evidence>
<evidence type="ECO:0000305" key="5"/>
<gene>
    <name type="primary">qoxA</name>
    <name type="ordered locus">SACOL1070</name>
</gene>